<sequence length="241" mass="27231">MGSFPFLLPFAELEVGQHLYWQLGNIRIHGQVFMTSWLLIGALLTLVVVGTKKMERDPKGVQNLLEFLWDYIRDLARTQIGEKVYRDWMPFIGTLFLFIFVSNWGGALVPWRLIRLPSGELGAPTADINTTVALALLVSLSYFYAGLSNKGLRYFEYYVHPTPIMLPFKIVEDFTKPLSLSFRLFGNILADELVVAVLVFLVPLVLPVPVMFLGLFTSAIQALIFATLAAYYIGEAVEEHH</sequence>
<gene>
    <name evidence="1" type="primary">atpB</name>
    <name evidence="1" type="synonym">atpI</name>
    <name type="ordered locus">P9211_15751</name>
</gene>
<feature type="chain" id="PRO_0000362376" description="ATP synthase subunit a">
    <location>
        <begin position="1"/>
        <end position="241"/>
    </location>
</feature>
<feature type="transmembrane region" description="Helical" evidence="1">
    <location>
        <begin position="30"/>
        <end position="50"/>
    </location>
</feature>
<feature type="transmembrane region" description="Helical" evidence="1">
    <location>
        <begin position="91"/>
        <end position="111"/>
    </location>
</feature>
<feature type="transmembrane region" description="Helical" evidence="1">
    <location>
        <begin position="128"/>
        <end position="148"/>
    </location>
</feature>
<feature type="transmembrane region" description="Helical" evidence="1">
    <location>
        <begin position="193"/>
        <end position="213"/>
    </location>
</feature>
<feature type="transmembrane region" description="Helical" evidence="1">
    <location>
        <begin position="214"/>
        <end position="234"/>
    </location>
</feature>
<evidence type="ECO:0000255" key="1">
    <source>
        <dbReference type="HAMAP-Rule" id="MF_01393"/>
    </source>
</evidence>
<comment type="function">
    <text evidence="1">Key component of the proton channel; it plays a direct role in the translocation of protons across the membrane.</text>
</comment>
<comment type="subunit">
    <text evidence="1">F-type ATPases have 2 components, CF(1) - the catalytic core - and CF(0) - the membrane proton channel. CF(1) has five subunits: alpha(3), beta(3), gamma(1), delta(1), epsilon(1). CF(0) has four main subunits: a, b, b' and c.</text>
</comment>
<comment type="subcellular location">
    <subcellularLocation>
        <location evidence="1">Cellular thylakoid membrane</location>
        <topology evidence="1">Multi-pass membrane protein</topology>
    </subcellularLocation>
</comment>
<comment type="similarity">
    <text evidence="1">Belongs to the ATPase A chain family.</text>
</comment>
<dbReference type="EMBL" id="CP000878">
    <property type="protein sequence ID" value="ABX09506.1"/>
    <property type="molecule type" value="Genomic_DNA"/>
</dbReference>
<dbReference type="RefSeq" id="WP_012196127.1">
    <property type="nucleotide sequence ID" value="NC_009976.1"/>
</dbReference>
<dbReference type="SMR" id="A9BCE4"/>
<dbReference type="STRING" id="93059.P9211_15751"/>
<dbReference type="KEGG" id="pmj:P9211_15751"/>
<dbReference type="eggNOG" id="COG0356">
    <property type="taxonomic scope" value="Bacteria"/>
</dbReference>
<dbReference type="HOGENOM" id="CLU_041018_2_4_3"/>
<dbReference type="OrthoDB" id="9789241at2"/>
<dbReference type="Proteomes" id="UP000000788">
    <property type="component" value="Chromosome"/>
</dbReference>
<dbReference type="GO" id="GO:0031676">
    <property type="term" value="C:plasma membrane-derived thylakoid membrane"/>
    <property type="evidence" value="ECO:0007669"/>
    <property type="project" value="UniProtKB-SubCell"/>
</dbReference>
<dbReference type="GO" id="GO:0045259">
    <property type="term" value="C:proton-transporting ATP synthase complex"/>
    <property type="evidence" value="ECO:0007669"/>
    <property type="project" value="UniProtKB-KW"/>
</dbReference>
<dbReference type="GO" id="GO:0046933">
    <property type="term" value="F:proton-transporting ATP synthase activity, rotational mechanism"/>
    <property type="evidence" value="ECO:0007669"/>
    <property type="project" value="UniProtKB-UniRule"/>
</dbReference>
<dbReference type="CDD" id="cd00310">
    <property type="entry name" value="ATP-synt_Fo_a_6"/>
    <property type="match status" value="1"/>
</dbReference>
<dbReference type="FunFam" id="1.20.120.220:FF:000001">
    <property type="entry name" value="ATP synthase subunit a, chloroplastic"/>
    <property type="match status" value="1"/>
</dbReference>
<dbReference type="Gene3D" id="1.20.120.220">
    <property type="entry name" value="ATP synthase, F0 complex, subunit A"/>
    <property type="match status" value="1"/>
</dbReference>
<dbReference type="HAMAP" id="MF_01393">
    <property type="entry name" value="ATP_synth_a_bact"/>
    <property type="match status" value="1"/>
</dbReference>
<dbReference type="InterPro" id="IPR045082">
    <property type="entry name" value="ATP_syn_F0_a_bact/chloroplast"/>
</dbReference>
<dbReference type="InterPro" id="IPR000568">
    <property type="entry name" value="ATP_synth_F0_asu"/>
</dbReference>
<dbReference type="InterPro" id="IPR023011">
    <property type="entry name" value="ATP_synth_F0_asu_AS"/>
</dbReference>
<dbReference type="InterPro" id="IPR035908">
    <property type="entry name" value="F0_ATP_A_sf"/>
</dbReference>
<dbReference type="NCBIfam" id="TIGR01131">
    <property type="entry name" value="ATP_synt_6_or_A"/>
    <property type="match status" value="1"/>
</dbReference>
<dbReference type="PANTHER" id="PTHR42823">
    <property type="entry name" value="ATP SYNTHASE SUBUNIT A, CHLOROPLASTIC"/>
    <property type="match status" value="1"/>
</dbReference>
<dbReference type="PANTHER" id="PTHR42823:SF3">
    <property type="entry name" value="ATP SYNTHASE SUBUNIT A, CHLOROPLASTIC"/>
    <property type="match status" value="1"/>
</dbReference>
<dbReference type="Pfam" id="PF00119">
    <property type="entry name" value="ATP-synt_A"/>
    <property type="match status" value="1"/>
</dbReference>
<dbReference type="PRINTS" id="PR00123">
    <property type="entry name" value="ATPASEA"/>
</dbReference>
<dbReference type="SUPFAM" id="SSF81336">
    <property type="entry name" value="F1F0 ATP synthase subunit A"/>
    <property type="match status" value="1"/>
</dbReference>
<dbReference type="PROSITE" id="PS00449">
    <property type="entry name" value="ATPASE_A"/>
    <property type="match status" value="1"/>
</dbReference>
<reference key="1">
    <citation type="journal article" date="2007" name="PLoS Genet.">
        <title>Patterns and implications of gene gain and loss in the evolution of Prochlorococcus.</title>
        <authorList>
            <person name="Kettler G.C."/>
            <person name="Martiny A.C."/>
            <person name="Huang K."/>
            <person name="Zucker J."/>
            <person name="Coleman M.L."/>
            <person name="Rodrigue S."/>
            <person name="Chen F."/>
            <person name="Lapidus A."/>
            <person name="Ferriera S."/>
            <person name="Johnson J."/>
            <person name="Steglich C."/>
            <person name="Church G.M."/>
            <person name="Richardson P."/>
            <person name="Chisholm S.W."/>
        </authorList>
    </citation>
    <scope>NUCLEOTIDE SEQUENCE [LARGE SCALE GENOMIC DNA]</scope>
    <source>
        <strain>MIT 9211</strain>
    </source>
</reference>
<protein>
    <recommendedName>
        <fullName evidence="1">ATP synthase subunit a</fullName>
    </recommendedName>
    <alternativeName>
        <fullName evidence="1">ATP synthase F0 sector subunit a</fullName>
    </alternativeName>
    <alternativeName>
        <fullName evidence="1">F-ATPase subunit 6</fullName>
    </alternativeName>
</protein>
<name>ATP6_PROM4</name>
<keyword id="KW-0066">ATP synthesis</keyword>
<keyword id="KW-0138">CF(0)</keyword>
<keyword id="KW-0375">Hydrogen ion transport</keyword>
<keyword id="KW-0406">Ion transport</keyword>
<keyword id="KW-0472">Membrane</keyword>
<keyword id="KW-1185">Reference proteome</keyword>
<keyword id="KW-0793">Thylakoid</keyword>
<keyword id="KW-0812">Transmembrane</keyword>
<keyword id="KW-1133">Transmembrane helix</keyword>
<keyword id="KW-0813">Transport</keyword>
<organism>
    <name type="scientific">Prochlorococcus marinus (strain MIT 9211)</name>
    <dbReference type="NCBI Taxonomy" id="93059"/>
    <lineage>
        <taxon>Bacteria</taxon>
        <taxon>Bacillati</taxon>
        <taxon>Cyanobacteriota</taxon>
        <taxon>Cyanophyceae</taxon>
        <taxon>Synechococcales</taxon>
        <taxon>Prochlorococcaceae</taxon>
        <taxon>Prochlorococcus</taxon>
    </lineage>
</organism>
<proteinExistence type="inferred from homology"/>
<accession>A9BCE4</accession>